<gene>
    <name evidence="1" type="primary">odhA</name>
    <name type="ordered locus">SAR1425</name>
</gene>
<keyword id="KW-0324">Glycolysis</keyword>
<keyword id="KW-0560">Oxidoreductase</keyword>
<keyword id="KW-0786">Thiamine pyrophosphate</keyword>
<protein>
    <recommendedName>
        <fullName evidence="1">2-oxoglutarate dehydrogenase E1 component</fullName>
        <ecNumber evidence="1">1.2.4.2</ecNumber>
    </recommendedName>
    <alternativeName>
        <fullName evidence="1">Alpha-ketoglutarate dehydrogenase</fullName>
    </alternativeName>
</protein>
<comment type="function">
    <text evidence="1">E1 component of the 2-oxoglutarate dehydrogenase (OGDH) complex which catalyzes the decarboxylation of 2-oxoglutarate, the first step in the conversion of 2-oxoglutarate to succinyl-CoA and CO(2).</text>
</comment>
<comment type="catalytic activity">
    <reaction evidence="1">
        <text>N(6)-[(R)-lipoyl]-L-lysyl-[protein] + 2-oxoglutarate + H(+) = N(6)-[(R)-S(8)-succinyldihydrolipoyl]-L-lysyl-[protein] + CO2</text>
        <dbReference type="Rhea" id="RHEA:12188"/>
        <dbReference type="Rhea" id="RHEA-COMP:10474"/>
        <dbReference type="Rhea" id="RHEA-COMP:20092"/>
        <dbReference type="ChEBI" id="CHEBI:15378"/>
        <dbReference type="ChEBI" id="CHEBI:16526"/>
        <dbReference type="ChEBI" id="CHEBI:16810"/>
        <dbReference type="ChEBI" id="CHEBI:83099"/>
        <dbReference type="ChEBI" id="CHEBI:83120"/>
        <dbReference type="EC" id="1.2.4.2"/>
    </reaction>
</comment>
<comment type="cofactor">
    <cofactor evidence="1">
        <name>thiamine diphosphate</name>
        <dbReference type="ChEBI" id="CHEBI:58937"/>
    </cofactor>
</comment>
<comment type="subunit">
    <text evidence="1">Homodimer. Part of the 2-oxoglutarate dehydrogenase (OGDH) complex composed of E1 (2-oxoglutarate dehydrogenase), E2 (dihydrolipoamide succinyltransferase) and E3 (dihydrolipoamide dehydrogenase); the complex contains multiple copies of the three enzymatic components (E1, E2 and E3).</text>
</comment>
<comment type="similarity">
    <text evidence="1">Belongs to the alpha-ketoglutarate dehydrogenase family.</text>
</comment>
<dbReference type="EC" id="1.2.4.2" evidence="1"/>
<dbReference type="EMBL" id="BX571856">
    <property type="protein sequence ID" value="CAG40422.1"/>
    <property type="molecule type" value="Genomic_DNA"/>
</dbReference>
<dbReference type="RefSeq" id="WP_000180659.1">
    <property type="nucleotide sequence ID" value="NC_002952.2"/>
</dbReference>
<dbReference type="SMR" id="Q6GGZ5"/>
<dbReference type="KEGG" id="sar:SAR1425"/>
<dbReference type="HOGENOM" id="CLU_004709_1_0_9"/>
<dbReference type="Proteomes" id="UP000000596">
    <property type="component" value="Chromosome"/>
</dbReference>
<dbReference type="GO" id="GO:0005829">
    <property type="term" value="C:cytosol"/>
    <property type="evidence" value="ECO:0007669"/>
    <property type="project" value="TreeGrafter"/>
</dbReference>
<dbReference type="GO" id="GO:0045252">
    <property type="term" value="C:oxoglutarate dehydrogenase complex"/>
    <property type="evidence" value="ECO:0007669"/>
    <property type="project" value="TreeGrafter"/>
</dbReference>
<dbReference type="GO" id="GO:0004591">
    <property type="term" value="F:oxoglutarate dehydrogenase (succinyl-transferring) activity"/>
    <property type="evidence" value="ECO:0007669"/>
    <property type="project" value="UniProtKB-UniRule"/>
</dbReference>
<dbReference type="GO" id="GO:0030976">
    <property type="term" value="F:thiamine pyrophosphate binding"/>
    <property type="evidence" value="ECO:0007669"/>
    <property type="project" value="UniProtKB-UniRule"/>
</dbReference>
<dbReference type="GO" id="GO:0006096">
    <property type="term" value="P:glycolytic process"/>
    <property type="evidence" value="ECO:0007669"/>
    <property type="project" value="UniProtKB-UniRule"/>
</dbReference>
<dbReference type="GO" id="GO:0006099">
    <property type="term" value="P:tricarboxylic acid cycle"/>
    <property type="evidence" value="ECO:0007669"/>
    <property type="project" value="TreeGrafter"/>
</dbReference>
<dbReference type="CDD" id="cd02016">
    <property type="entry name" value="TPP_E1_OGDC_like"/>
    <property type="match status" value="1"/>
</dbReference>
<dbReference type="FunFam" id="3.40.50.11610:FF:000002">
    <property type="entry name" value="2-oxoglutarate dehydrogenase E1 component"/>
    <property type="match status" value="1"/>
</dbReference>
<dbReference type="FunFam" id="3.40.50.970:FF:000036">
    <property type="entry name" value="2-oxoglutarate dehydrogenase E1 component"/>
    <property type="match status" value="1"/>
</dbReference>
<dbReference type="Gene3D" id="3.40.50.12470">
    <property type="match status" value="1"/>
</dbReference>
<dbReference type="Gene3D" id="3.40.50.970">
    <property type="match status" value="1"/>
</dbReference>
<dbReference type="Gene3D" id="3.40.50.11610">
    <property type="entry name" value="Multifunctional 2-oxoglutarate metabolism enzyme, C-terminal domain"/>
    <property type="match status" value="1"/>
</dbReference>
<dbReference type="Gene3D" id="1.10.287.1150">
    <property type="entry name" value="TPP helical domain"/>
    <property type="match status" value="1"/>
</dbReference>
<dbReference type="HAMAP" id="MF_01169">
    <property type="entry name" value="SucA_OdhA"/>
    <property type="match status" value="1"/>
</dbReference>
<dbReference type="InterPro" id="IPR011603">
    <property type="entry name" value="2oxoglutarate_DH_E1"/>
</dbReference>
<dbReference type="InterPro" id="IPR023784">
    <property type="entry name" value="2oxoglutarate_DH_E1_bac"/>
</dbReference>
<dbReference type="InterPro" id="IPR001017">
    <property type="entry name" value="DH_E1"/>
</dbReference>
<dbReference type="InterPro" id="IPR042179">
    <property type="entry name" value="KGD_C_sf"/>
</dbReference>
<dbReference type="InterPro" id="IPR031717">
    <property type="entry name" value="ODO-1/KGD_C"/>
</dbReference>
<dbReference type="InterPro" id="IPR029061">
    <property type="entry name" value="THDP-binding"/>
</dbReference>
<dbReference type="InterPro" id="IPR005475">
    <property type="entry name" value="Transketolase-like_Pyr-bd"/>
</dbReference>
<dbReference type="NCBIfam" id="TIGR00239">
    <property type="entry name" value="2oxo_dh_E1"/>
    <property type="match status" value="1"/>
</dbReference>
<dbReference type="NCBIfam" id="NF006914">
    <property type="entry name" value="PRK09404.1"/>
    <property type="match status" value="1"/>
</dbReference>
<dbReference type="NCBIfam" id="NF008907">
    <property type="entry name" value="PRK12270.1"/>
    <property type="match status" value="1"/>
</dbReference>
<dbReference type="PANTHER" id="PTHR23152:SF4">
    <property type="entry name" value="2-OXOADIPATE DEHYDROGENASE COMPLEX COMPONENT E1"/>
    <property type="match status" value="1"/>
</dbReference>
<dbReference type="PANTHER" id="PTHR23152">
    <property type="entry name" value="2-OXOGLUTARATE DEHYDROGENASE"/>
    <property type="match status" value="1"/>
</dbReference>
<dbReference type="Pfam" id="PF00676">
    <property type="entry name" value="E1_dh"/>
    <property type="match status" value="1"/>
</dbReference>
<dbReference type="Pfam" id="PF16870">
    <property type="entry name" value="OxoGdeHyase_C"/>
    <property type="match status" value="1"/>
</dbReference>
<dbReference type="Pfam" id="PF02779">
    <property type="entry name" value="Transket_pyr"/>
    <property type="match status" value="1"/>
</dbReference>
<dbReference type="PIRSF" id="PIRSF000157">
    <property type="entry name" value="Oxoglu_dh_E1"/>
    <property type="match status" value="1"/>
</dbReference>
<dbReference type="SMART" id="SM00861">
    <property type="entry name" value="Transket_pyr"/>
    <property type="match status" value="1"/>
</dbReference>
<dbReference type="SUPFAM" id="SSF52518">
    <property type="entry name" value="Thiamin diphosphate-binding fold (THDP-binding)"/>
    <property type="match status" value="2"/>
</dbReference>
<organism>
    <name type="scientific">Staphylococcus aureus (strain MRSA252)</name>
    <dbReference type="NCBI Taxonomy" id="282458"/>
    <lineage>
        <taxon>Bacteria</taxon>
        <taxon>Bacillati</taxon>
        <taxon>Bacillota</taxon>
        <taxon>Bacilli</taxon>
        <taxon>Bacillales</taxon>
        <taxon>Staphylococcaceae</taxon>
        <taxon>Staphylococcus</taxon>
    </lineage>
</organism>
<proteinExistence type="inferred from homology"/>
<sequence>MTNERKEVSEAPVNFGANLGLMLDLYDDFLQDPSSVPEDLQVLFSTIKNDDSIVPALKSTSSQNSDGTIKRVMRLIDNIRQYGHLKADIYPVNPPKRKHVPKLEIEDFDLDQQTLEGISAGIVSDHFADIYDNAYEAILRMEKRYKGPIAFEYTHINNNTERGWLKRRIETPYKVTLNNNEKRALFKQLAYVEGFEKYLHKNFVGAKRFSIEGVDALVPMLQRTITIAAKEGIKNIQIGMAHRGRLNVLTHVLEKPYEMMISEFMHTDPMKFLPEDGSLQLTAGWTGDVKYHLGGIKTTDSYGTMQRIALANNPSHLEIVAPVVEGRTRAAQDDTQRAGAPTTDHHKAMPIIIHGDAAYPGQGINFETMNLGNLKGYSTGGSLHIITNNRIGFTTEPIDARSTTYSTDVAKGYDVPIFHVNADDVEATIEAIDIAMEFRKEFHKDVVIDLVGYRRFGHNEMDEPSITNPVPYQNIRKHDSVEYVFGKKLVNEGIISEDEMHSFIEQVQKELRQAHDKINKADKMDNPDMEKPAELALPLQADEQSFTFDHLKEINDALLTYPDGFNILKKLNKVLEKRHEPFNKEDGLVDWAQAEQLAFATILQDGTPIRLTGQDSERGTFSHRHAVLHDEQTGETYTPLHHVPDQKATFDIHNSPLSEAAVVGFEYGYNVENKKSFNIWEAQYGDFANMSQMIFDNFLFSSRSKWGERSGLTLFLPHAYEGQGPEHSSARLERFLQLAAENNCTVVNLSSSSNYFHLLRAQAASLDSEQMRPLVVMSPKSLLRNKTVAKPIDEFTSGGFEPILTESYQADKVTKVILATGKMFIDLKEALAKNPDESVLLVAIERLYPFPEEEIEALLAQLPNLEEVSWVQEEPKNQGAWLYVYPYVKVLVADKYDLSYHGRIQRAAPAEGDGEIHKLVQNKIIENALKNN</sequence>
<feature type="chain" id="PRO_0000162179" description="2-oxoglutarate dehydrogenase E1 component">
    <location>
        <begin position="1"/>
        <end position="932"/>
    </location>
</feature>
<name>ODO1_STAAR</name>
<evidence type="ECO:0000255" key="1">
    <source>
        <dbReference type="HAMAP-Rule" id="MF_01169"/>
    </source>
</evidence>
<reference key="1">
    <citation type="journal article" date="2004" name="Proc. Natl. Acad. Sci. U.S.A.">
        <title>Complete genomes of two clinical Staphylococcus aureus strains: evidence for the rapid evolution of virulence and drug resistance.</title>
        <authorList>
            <person name="Holden M.T.G."/>
            <person name="Feil E.J."/>
            <person name="Lindsay J.A."/>
            <person name="Peacock S.J."/>
            <person name="Day N.P.J."/>
            <person name="Enright M.C."/>
            <person name="Foster T.J."/>
            <person name="Moore C.E."/>
            <person name="Hurst L."/>
            <person name="Atkin R."/>
            <person name="Barron A."/>
            <person name="Bason N."/>
            <person name="Bentley S.D."/>
            <person name="Chillingworth C."/>
            <person name="Chillingworth T."/>
            <person name="Churcher C."/>
            <person name="Clark L."/>
            <person name="Corton C."/>
            <person name="Cronin A."/>
            <person name="Doggett J."/>
            <person name="Dowd L."/>
            <person name="Feltwell T."/>
            <person name="Hance Z."/>
            <person name="Harris B."/>
            <person name="Hauser H."/>
            <person name="Holroyd S."/>
            <person name="Jagels K."/>
            <person name="James K.D."/>
            <person name="Lennard N."/>
            <person name="Line A."/>
            <person name="Mayes R."/>
            <person name="Moule S."/>
            <person name="Mungall K."/>
            <person name="Ormond D."/>
            <person name="Quail M.A."/>
            <person name="Rabbinowitsch E."/>
            <person name="Rutherford K.M."/>
            <person name="Sanders M."/>
            <person name="Sharp S."/>
            <person name="Simmonds M."/>
            <person name="Stevens K."/>
            <person name="Whitehead S."/>
            <person name="Barrell B.G."/>
            <person name="Spratt B.G."/>
            <person name="Parkhill J."/>
        </authorList>
    </citation>
    <scope>NUCLEOTIDE SEQUENCE [LARGE SCALE GENOMIC DNA]</scope>
    <source>
        <strain>MRSA252</strain>
    </source>
</reference>
<accession>Q6GGZ5</accession>